<evidence type="ECO:0000255" key="1">
    <source>
        <dbReference type="HAMAP-Rule" id="MF_01576"/>
    </source>
</evidence>
<accession>Q5HUU1</accession>
<comment type="function">
    <text evidence="1">Catalyzes the oxidation of 5,10-methylenetetrahydrofolate to 5,10-methenyltetrahydrofolate and then the hydrolysis of 5,10-methenyltetrahydrofolate to 10-formyltetrahydrofolate.</text>
</comment>
<comment type="catalytic activity">
    <reaction evidence="1">
        <text>(6R)-5,10-methylene-5,6,7,8-tetrahydrofolate + NADP(+) = (6R)-5,10-methenyltetrahydrofolate + NADPH</text>
        <dbReference type="Rhea" id="RHEA:22812"/>
        <dbReference type="ChEBI" id="CHEBI:15636"/>
        <dbReference type="ChEBI" id="CHEBI:57455"/>
        <dbReference type="ChEBI" id="CHEBI:57783"/>
        <dbReference type="ChEBI" id="CHEBI:58349"/>
        <dbReference type="EC" id="1.5.1.5"/>
    </reaction>
</comment>
<comment type="catalytic activity">
    <reaction evidence="1">
        <text>(6R)-5,10-methenyltetrahydrofolate + H2O = (6R)-10-formyltetrahydrofolate + H(+)</text>
        <dbReference type="Rhea" id="RHEA:23700"/>
        <dbReference type="ChEBI" id="CHEBI:15377"/>
        <dbReference type="ChEBI" id="CHEBI:15378"/>
        <dbReference type="ChEBI" id="CHEBI:57455"/>
        <dbReference type="ChEBI" id="CHEBI:195366"/>
        <dbReference type="EC" id="3.5.4.9"/>
    </reaction>
</comment>
<comment type="pathway">
    <text evidence="1">One-carbon metabolism; tetrahydrofolate interconversion.</text>
</comment>
<comment type="subunit">
    <text evidence="1">Homodimer.</text>
</comment>
<comment type="similarity">
    <text evidence="1">Belongs to the tetrahydrofolate dehydrogenase/cyclohydrolase family.</text>
</comment>
<dbReference type="EC" id="1.5.1.5" evidence="1"/>
<dbReference type="EC" id="3.5.4.9" evidence="1"/>
<dbReference type="EMBL" id="CP000025">
    <property type="protein sequence ID" value="AAW35279.1"/>
    <property type="molecule type" value="Genomic_DNA"/>
</dbReference>
<dbReference type="RefSeq" id="WP_002867475.1">
    <property type="nucleotide sequence ID" value="NC_003912.7"/>
</dbReference>
<dbReference type="SMR" id="Q5HUU1"/>
<dbReference type="KEGG" id="cjr:CJE0942"/>
<dbReference type="HOGENOM" id="CLU_034045_2_1_7"/>
<dbReference type="UniPathway" id="UPA00193"/>
<dbReference type="GO" id="GO:0005829">
    <property type="term" value="C:cytosol"/>
    <property type="evidence" value="ECO:0007669"/>
    <property type="project" value="TreeGrafter"/>
</dbReference>
<dbReference type="GO" id="GO:0004477">
    <property type="term" value="F:methenyltetrahydrofolate cyclohydrolase activity"/>
    <property type="evidence" value="ECO:0007669"/>
    <property type="project" value="UniProtKB-UniRule"/>
</dbReference>
<dbReference type="GO" id="GO:0004488">
    <property type="term" value="F:methylenetetrahydrofolate dehydrogenase (NADP+) activity"/>
    <property type="evidence" value="ECO:0007669"/>
    <property type="project" value="UniProtKB-UniRule"/>
</dbReference>
<dbReference type="GO" id="GO:0000105">
    <property type="term" value="P:L-histidine biosynthetic process"/>
    <property type="evidence" value="ECO:0007669"/>
    <property type="project" value="UniProtKB-KW"/>
</dbReference>
<dbReference type="GO" id="GO:0009086">
    <property type="term" value="P:methionine biosynthetic process"/>
    <property type="evidence" value="ECO:0007669"/>
    <property type="project" value="UniProtKB-KW"/>
</dbReference>
<dbReference type="GO" id="GO:0006164">
    <property type="term" value="P:purine nucleotide biosynthetic process"/>
    <property type="evidence" value="ECO:0007669"/>
    <property type="project" value="UniProtKB-KW"/>
</dbReference>
<dbReference type="GO" id="GO:0035999">
    <property type="term" value="P:tetrahydrofolate interconversion"/>
    <property type="evidence" value="ECO:0007669"/>
    <property type="project" value="UniProtKB-UniRule"/>
</dbReference>
<dbReference type="CDD" id="cd01080">
    <property type="entry name" value="NAD_bind_m-THF_DH_Cyclohyd"/>
    <property type="match status" value="1"/>
</dbReference>
<dbReference type="FunFam" id="3.40.50.720:FF:000094">
    <property type="entry name" value="Bifunctional protein FolD"/>
    <property type="match status" value="1"/>
</dbReference>
<dbReference type="FunFam" id="3.40.50.10860:FF:000005">
    <property type="entry name" value="C-1-tetrahydrofolate synthase, cytoplasmic, putative"/>
    <property type="match status" value="1"/>
</dbReference>
<dbReference type="Gene3D" id="3.40.50.10860">
    <property type="entry name" value="Leucine Dehydrogenase, chain A, domain 1"/>
    <property type="match status" value="1"/>
</dbReference>
<dbReference type="Gene3D" id="3.40.50.720">
    <property type="entry name" value="NAD(P)-binding Rossmann-like Domain"/>
    <property type="match status" value="1"/>
</dbReference>
<dbReference type="HAMAP" id="MF_01576">
    <property type="entry name" value="THF_DHG_CYH"/>
    <property type="match status" value="1"/>
</dbReference>
<dbReference type="InterPro" id="IPR046346">
    <property type="entry name" value="Aminoacid_DH-like_N_sf"/>
</dbReference>
<dbReference type="InterPro" id="IPR036291">
    <property type="entry name" value="NAD(P)-bd_dom_sf"/>
</dbReference>
<dbReference type="InterPro" id="IPR000672">
    <property type="entry name" value="THF_DH/CycHdrlase"/>
</dbReference>
<dbReference type="InterPro" id="IPR020630">
    <property type="entry name" value="THF_DH/CycHdrlase_cat_dom"/>
</dbReference>
<dbReference type="InterPro" id="IPR020867">
    <property type="entry name" value="THF_DH/CycHdrlase_CS"/>
</dbReference>
<dbReference type="InterPro" id="IPR020631">
    <property type="entry name" value="THF_DH/CycHdrlase_NAD-bd_dom"/>
</dbReference>
<dbReference type="NCBIfam" id="NF008058">
    <property type="entry name" value="PRK10792.1"/>
    <property type="match status" value="1"/>
</dbReference>
<dbReference type="NCBIfam" id="NF010763">
    <property type="entry name" value="PRK14166.1"/>
    <property type="match status" value="1"/>
</dbReference>
<dbReference type="NCBIfam" id="NF010783">
    <property type="entry name" value="PRK14186.1"/>
    <property type="match status" value="1"/>
</dbReference>
<dbReference type="NCBIfam" id="NF010787">
    <property type="entry name" value="PRK14191.1"/>
    <property type="match status" value="1"/>
</dbReference>
<dbReference type="PANTHER" id="PTHR48099:SF5">
    <property type="entry name" value="C-1-TETRAHYDROFOLATE SYNTHASE, CYTOPLASMIC"/>
    <property type="match status" value="1"/>
</dbReference>
<dbReference type="PANTHER" id="PTHR48099">
    <property type="entry name" value="C-1-TETRAHYDROFOLATE SYNTHASE, CYTOPLASMIC-RELATED"/>
    <property type="match status" value="1"/>
</dbReference>
<dbReference type="Pfam" id="PF00763">
    <property type="entry name" value="THF_DHG_CYH"/>
    <property type="match status" value="1"/>
</dbReference>
<dbReference type="Pfam" id="PF02882">
    <property type="entry name" value="THF_DHG_CYH_C"/>
    <property type="match status" value="1"/>
</dbReference>
<dbReference type="PRINTS" id="PR00085">
    <property type="entry name" value="THFDHDRGNASE"/>
</dbReference>
<dbReference type="SUPFAM" id="SSF53223">
    <property type="entry name" value="Aminoacid dehydrogenase-like, N-terminal domain"/>
    <property type="match status" value="1"/>
</dbReference>
<dbReference type="SUPFAM" id="SSF51735">
    <property type="entry name" value="NAD(P)-binding Rossmann-fold domains"/>
    <property type="match status" value="1"/>
</dbReference>
<dbReference type="PROSITE" id="PS00766">
    <property type="entry name" value="THF_DHG_CYH_1"/>
    <property type="match status" value="1"/>
</dbReference>
<dbReference type="PROSITE" id="PS00767">
    <property type="entry name" value="THF_DHG_CYH_2"/>
    <property type="match status" value="1"/>
</dbReference>
<proteinExistence type="inferred from homology"/>
<organism>
    <name type="scientific">Campylobacter jejuni (strain RM1221)</name>
    <dbReference type="NCBI Taxonomy" id="195099"/>
    <lineage>
        <taxon>Bacteria</taxon>
        <taxon>Pseudomonadati</taxon>
        <taxon>Campylobacterota</taxon>
        <taxon>Epsilonproteobacteria</taxon>
        <taxon>Campylobacterales</taxon>
        <taxon>Campylobacteraceae</taxon>
        <taxon>Campylobacter</taxon>
    </lineage>
</organism>
<gene>
    <name evidence="1" type="primary">folD</name>
    <name type="ordered locus">CJE0942</name>
</gene>
<keyword id="KW-0028">Amino-acid biosynthesis</keyword>
<keyword id="KW-0368">Histidine biosynthesis</keyword>
<keyword id="KW-0378">Hydrolase</keyword>
<keyword id="KW-0486">Methionine biosynthesis</keyword>
<keyword id="KW-0511">Multifunctional enzyme</keyword>
<keyword id="KW-0521">NADP</keyword>
<keyword id="KW-0554">One-carbon metabolism</keyword>
<keyword id="KW-0560">Oxidoreductase</keyword>
<keyword id="KW-0658">Purine biosynthesis</keyword>
<feature type="chain" id="PRO_0000268305" description="Bifunctional protein FolD">
    <location>
        <begin position="1"/>
        <end position="282"/>
    </location>
</feature>
<feature type="binding site" evidence="1">
    <location>
        <begin position="164"/>
        <end position="166"/>
    </location>
    <ligand>
        <name>NADP(+)</name>
        <dbReference type="ChEBI" id="CHEBI:58349"/>
    </ligand>
</feature>
<feature type="binding site" evidence="1">
    <location>
        <position position="189"/>
    </location>
    <ligand>
        <name>NADP(+)</name>
        <dbReference type="ChEBI" id="CHEBI:58349"/>
    </ligand>
</feature>
<feature type="binding site" evidence="1">
    <location>
        <position position="230"/>
    </location>
    <ligand>
        <name>NADP(+)</name>
        <dbReference type="ChEBI" id="CHEBI:58349"/>
    </ligand>
</feature>
<sequence>MTLLDGKALSAKIKEELKEKNQFLKSKGIESCLAVILVGDDPASQTYVKSKAKACEECGIKSLVYHLNENTTQNELLALINTLNHDDSVHGILVQLPLPDHICKDLILESIISSKDVDGFHPINVGYLNLGLESGFLPCTPLGVMKLLKAYEIDLEGKDAVIIGASNIVGRPMATMLLNAGATVSVCHIKTKDLSLYTRQADLIIVAAGCVNLLRSDMVKEGVIVIDVGINRLESGKIVGDVDFEEVSKKSSYITPVPGGVGPMTIAMLLENTVKSAKNRLN</sequence>
<protein>
    <recommendedName>
        <fullName evidence="1">Bifunctional protein FolD</fullName>
    </recommendedName>
    <domain>
        <recommendedName>
            <fullName evidence="1">Methylenetetrahydrofolate dehydrogenase</fullName>
            <ecNumber evidence="1">1.5.1.5</ecNumber>
        </recommendedName>
    </domain>
    <domain>
        <recommendedName>
            <fullName evidence="1">Methenyltetrahydrofolate cyclohydrolase</fullName>
            <ecNumber evidence="1">3.5.4.9</ecNumber>
        </recommendedName>
    </domain>
</protein>
<reference key="1">
    <citation type="journal article" date="2005" name="PLoS Biol.">
        <title>Major structural differences and novel potential virulence mechanisms from the genomes of multiple Campylobacter species.</title>
        <authorList>
            <person name="Fouts D.E."/>
            <person name="Mongodin E.F."/>
            <person name="Mandrell R.E."/>
            <person name="Miller W.G."/>
            <person name="Rasko D.A."/>
            <person name="Ravel J."/>
            <person name="Brinkac L.M."/>
            <person name="DeBoy R.T."/>
            <person name="Parker C.T."/>
            <person name="Daugherty S.C."/>
            <person name="Dodson R.J."/>
            <person name="Durkin A.S."/>
            <person name="Madupu R."/>
            <person name="Sullivan S.A."/>
            <person name="Shetty J.U."/>
            <person name="Ayodeji M.A."/>
            <person name="Shvartsbeyn A."/>
            <person name="Schatz M.C."/>
            <person name="Badger J.H."/>
            <person name="Fraser C.M."/>
            <person name="Nelson K.E."/>
        </authorList>
    </citation>
    <scope>NUCLEOTIDE SEQUENCE [LARGE SCALE GENOMIC DNA]</scope>
    <source>
        <strain>RM1221</strain>
    </source>
</reference>
<name>FOLD_CAMJR</name>